<evidence type="ECO:0000255" key="1">
    <source>
        <dbReference type="HAMAP-Rule" id="MF_00361"/>
    </source>
</evidence>
<sequence length="296" mass="32506">MTFKYHKVAIVGKHYKKEVSQMVETLYAYLQQQGLEIIIENDTAADTSLVNVAIASLKEIALRCDVAIVVGGDGNFLKASRLLALYSNIPVIGINKGKLGFLTTLAADDNALKNDLYAILKGDSSVTKMSMLKYRVDNNLRAPLEASIALNEIAITASRGLMFGLKVFIDGRYAFDQRGDGLIVSTPTGSTAHAMSAGGPILNPNQNSVVLVPICSHSLNSRPLVISDESVIDIYITDYNDPESVLSIDGRHDTILKAHQKVTIQKARKKVTVLHTKDYNYYDTLREKLGWSKVLF</sequence>
<dbReference type="EC" id="2.7.1.23" evidence="1"/>
<dbReference type="EMBL" id="AM286280">
    <property type="protein sequence ID" value="CAL09448.1"/>
    <property type="molecule type" value="Genomic_DNA"/>
</dbReference>
<dbReference type="RefSeq" id="WP_003022256.1">
    <property type="nucleotide sequence ID" value="NC_008245.1"/>
</dbReference>
<dbReference type="SMR" id="Q14GH2"/>
<dbReference type="KEGG" id="ftf:FTF1432c"/>
<dbReference type="HOGENOM" id="CLU_008831_0_1_6"/>
<dbReference type="GO" id="GO:0005737">
    <property type="term" value="C:cytoplasm"/>
    <property type="evidence" value="ECO:0007669"/>
    <property type="project" value="UniProtKB-SubCell"/>
</dbReference>
<dbReference type="GO" id="GO:0005524">
    <property type="term" value="F:ATP binding"/>
    <property type="evidence" value="ECO:0007669"/>
    <property type="project" value="UniProtKB-KW"/>
</dbReference>
<dbReference type="GO" id="GO:0046872">
    <property type="term" value="F:metal ion binding"/>
    <property type="evidence" value="ECO:0007669"/>
    <property type="project" value="UniProtKB-UniRule"/>
</dbReference>
<dbReference type="GO" id="GO:0051287">
    <property type="term" value="F:NAD binding"/>
    <property type="evidence" value="ECO:0007669"/>
    <property type="project" value="UniProtKB-ARBA"/>
</dbReference>
<dbReference type="GO" id="GO:0003951">
    <property type="term" value="F:NAD+ kinase activity"/>
    <property type="evidence" value="ECO:0007669"/>
    <property type="project" value="UniProtKB-UniRule"/>
</dbReference>
<dbReference type="GO" id="GO:0019674">
    <property type="term" value="P:NAD metabolic process"/>
    <property type="evidence" value="ECO:0007669"/>
    <property type="project" value="InterPro"/>
</dbReference>
<dbReference type="GO" id="GO:0006741">
    <property type="term" value="P:NADP biosynthetic process"/>
    <property type="evidence" value="ECO:0007669"/>
    <property type="project" value="UniProtKB-UniRule"/>
</dbReference>
<dbReference type="Gene3D" id="3.40.50.10330">
    <property type="entry name" value="Probable inorganic polyphosphate/atp-NAD kinase, domain 1"/>
    <property type="match status" value="1"/>
</dbReference>
<dbReference type="Gene3D" id="2.60.200.30">
    <property type="entry name" value="Probable inorganic polyphosphate/atp-NAD kinase, domain 2"/>
    <property type="match status" value="1"/>
</dbReference>
<dbReference type="HAMAP" id="MF_00361">
    <property type="entry name" value="NAD_kinase"/>
    <property type="match status" value="1"/>
</dbReference>
<dbReference type="InterPro" id="IPR017438">
    <property type="entry name" value="ATP-NAD_kinase_N"/>
</dbReference>
<dbReference type="InterPro" id="IPR017437">
    <property type="entry name" value="ATP-NAD_kinase_PpnK-typ_C"/>
</dbReference>
<dbReference type="InterPro" id="IPR016064">
    <property type="entry name" value="NAD/diacylglycerol_kinase_sf"/>
</dbReference>
<dbReference type="InterPro" id="IPR002504">
    <property type="entry name" value="NADK"/>
</dbReference>
<dbReference type="PANTHER" id="PTHR20275">
    <property type="entry name" value="NAD KINASE"/>
    <property type="match status" value="1"/>
</dbReference>
<dbReference type="PANTHER" id="PTHR20275:SF0">
    <property type="entry name" value="NAD KINASE"/>
    <property type="match status" value="1"/>
</dbReference>
<dbReference type="Pfam" id="PF01513">
    <property type="entry name" value="NAD_kinase"/>
    <property type="match status" value="1"/>
</dbReference>
<dbReference type="Pfam" id="PF20143">
    <property type="entry name" value="NAD_kinase_C"/>
    <property type="match status" value="1"/>
</dbReference>
<dbReference type="SUPFAM" id="SSF111331">
    <property type="entry name" value="NAD kinase/diacylglycerol kinase-like"/>
    <property type="match status" value="1"/>
</dbReference>
<keyword id="KW-0067">ATP-binding</keyword>
<keyword id="KW-0963">Cytoplasm</keyword>
<keyword id="KW-0418">Kinase</keyword>
<keyword id="KW-0520">NAD</keyword>
<keyword id="KW-0521">NADP</keyword>
<keyword id="KW-0547">Nucleotide-binding</keyword>
<keyword id="KW-0808">Transferase</keyword>
<reference key="1">
    <citation type="journal article" date="2007" name="PLoS ONE">
        <title>Genome sequencing shows that European isolates of Francisella tularensis subspecies tularensis are almost identical to US laboratory strain Schu S4.</title>
        <authorList>
            <person name="Chaudhuri R.R."/>
            <person name="Ren C.-P."/>
            <person name="Desmond L."/>
            <person name="Vincent G.A."/>
            <person name="Silman N.J."/>
            <person name="Brehm J.K."/>
            <person name="Elmore M.J."/>
            <person name="Hudson M.J."/>
            <person name="Forsman M."/>
            <person name="Isherwood K.E."/>
            <person name="Gurycova D."/>
            <person name="Minton N.P."/>
            <person name="Titball R.W."/>
            <person name="Pallen M.J."/>
            <person name="Vipond R."/>
        </authorList>
    </citation>
    <scope>NUCLEOTIDE SEQUENCE [LARGE SCALE GENOMIC DNA]</scope>
    <source>
        <strain>FSC 198</strain>
    </source>
</reference>
<protein>
    <recommendedName>
        <fullName evidence="1">NAD kinase</fullName>
        <ecNumber evidence="1">2.7.1.23</ecNumber>
    </recommendedName>
    <alternativeName>
        <fullName evidence="1">ATP-dependent NAD kinase</fullName>
    </alternativeName>
</protein>
<proteinExistence type="inferred from homology"/>
<comment type="function">
    <text evidence="1">Involved in the regulation of the intracellular balance of NAD and NADP, and is a key enzyme in the biosynthesis of NADP. Catalyzes specifically the phosphorylation on 2'-hydroxyl of the adenosine moiety of NAD to yield NADP.</text>
</comment>
<comment type="catalytic activity">
    <reaction evidence="1">
        <text>NAD(+) + ATP = ADP + NADP(+) + H(+)</text>
        <dbReference type="Rhea" id="RHEA:18629"/>
        <dbReference type="ChEBI" id="CHEBI:15378"/>
        <dbReference type="ChEBI" id="CHEBI:30616"/>
        <dbReference type="ChEBI" id="CHEBI:57540"/>
        <dbReference type="ChEBI" id="CHEBI:58349"/>
        <dbReference type="ChEBI" id="CHEBI:456216"/>
        <dbReference type="EC" id="2.7.1.23"/>
    </reaction>
</comment>
<comment type="cofactor">
    <cofactor evidence="1">
        <name>a divalent metal cation</name>
        <dbReference type="ChEBI" id="CHEBI:60240"/>
    </cofactor>
</comment>
<comment type="subcellular location">
    <subcellularLocation>
        <location evidence="1">Cytoplasm</location>
    </subcellularLocation>
</comment>
<comment type="similarity">
    <text evidence="1">Belongs to the NAD kinase family.</text>
</comment>
<name>NADK_FRAT1</name>
<feature type="chain" id="PRO_1000005406" description="NAD kinase">
    <location>
        <begin position="1"/>
        <end position="296"/>
    </location>
</feature>
<feature type="active site" description="Proton acceptor" evidence="1">
    <location>
        <position position="73"/>
    </location>
</feature>
<feature type="binding site" evidence="1">
    <location>
        <begin position="73"/>
        <end position="74"/>
    </location>
    <ligand>
        <name>NAD(+)</name>
        <dbReference type="ChEBI" id="CHEBI:57540"/>
    </ligand>
</feature>
<feature type="binding site" evidence="1">
    <location>
        <position position="78"/>
    </location>
    <ligand>
        <name>NAD(+)</name>
        <dbReference type="ChEBI" id="CHEBI:57540"/>
    </ligand>
</feature>
<feature type="binding site" evidence="1">
    <location>
        <begin position="151"/>
        <end position="152"/>
    </location>
    <ligand>
        <name>NAD(+)</name>
        <dbReference type="ChEBI" id="CHEBI:57540"/>
    </ligand>
</feature>
<feature type="binding site" evidence="1">
    <location>
        <position position="178"/>
    </location>
    <ligand>
        <name>NAD(+)</name>
        <dbReference type="ChEBI" id="CHEBI:57540"/>
    </ligand>
</feature>
<feature type="binding site" evidence="1">
    <location>
        <position position="180"/>
    </location>
    <ligand>
        <name>NAD(+)</name>
        <dbReference type="ChEBI" id="CHEBI:57540"/>
    </ligand>
</feature>
<feature type="binding site" evidence="1">
    <location>
        <begin position="191"/>
        <end position="196"/>
    </location>
    <ligand>
        <name>NAD(+)</name>
        <dbReference type="ChEBI" id="CHEBI:57540"/>
    </ligand>
</feature>
<gene>
    <name evidence="1" type="primary">nadK</name>
    <name type="ordered locus">FTF1432c</name>
</gene>
<organism>
    <name type="scientific">Francisella tularensis subsp. tularensis (strain FSC 198)</name>
    <dbReference type="NCBI Taxonomy" id="393115"/>
    <lineage>
        <taxon>Bacteria</taxon>
        <taxon>Pseudomonadati</taxon>
        <taxon>Pseudomonadota</taxon>
        <taxon>Gammaproteobacteria</taxon>
        <taxon>Thiotrichales</taxon>
        <taxon>Francisellaceae</taxon>
        <taxon>Francisella</taxon>
    </lineage>
</organism>
<accession>Q14GH2</accession>